<feature type="chain" id="PRO_0000268761" description="Photosystem I reaction center subunit IX">
    <location>
        <begin position="1"/>
        <end position="39"/>
    </location>
</feature>
<feature type="transmembrane region" description="Helical" evidence="1">
    <location>
        <begin position="4"/>
        <end position="24"/>
    </location>
</feature>
<name>PSAJ_SYNS3</name>
<comment type="function">
    <text evidence="1">May help in the organization of the PsaE and PsaF subunits.</text>
</comment>
<comment type="subcellular location">
    <subcellularLocation>
        <location evidence="1">Cellular thylakoid membrane</location>
        <topology evidence="1">Single-pass membrane protein</topology>
    </subcellularLocation>
</comment>
<comment type="similarity">
    <text evidence="1">Belongs to the PsaJ family.</text>
</comment>
<sequence length="39" mass="4494">MKKFLTTAPVVAAIWFTLTAGILIEWNRFFPDLLFHPMG</sequence>
<keyword id="KW-0472">Membrane</keyword>
<keyword id="KW-0602">Photosynthesis</keyword>
<keyword id="KW-0603">Photosystem I</keyword>
<keyword id="KW-1185">Reference proteome</keyword>
<keyword id="KW-0793">Thylakoid</keyword>
<keyword id="KW-0812">Transmembrane</keyword>
<keyword id="KW-1133">Transmembrane helix</keyword>
<dbReference type="EMBL" id="CP000435">
    <property type="protein sequence ID" value="ABI47025.1"/>
    <property type="molecule type" value="Genomic_DNA"/>
</dbReference>
<dbReference type="RefSeq" id="WP_011620067.1">
    <property type="nucleotide sequence ID" value="NC_008319.1"/>
</dbReference>
<dbReference type="SMR" id="Q0I867"/>
<dbReference type="STRING" id="64471.sync_2154"/>
<dbReference type="KEGG" id="syg:sync_2154"/>
<dbReference type="eggNOG" id="ENOG5033A5A">
    <property type="taxonomic scope" value="Bacteria"/>
</dbReference>
<dbReference type="HOGENOM" id="CLU_212133_1_1_3"/>
<dbReference type="OrthoDB" id="532702at2"/>
<dbReference type="Proteomes" id="UP000001961">
    <property type="component" value="Chromosome"/>
</dbReference>
<dbReference type="GO" id="GO:0009522">
    <property type="term" value="C:photosystem I"/>
    <property type="evidence" value="ECO:0007669"/>
    <property type="project" value="UniProtKB-KW"/>
</dbReference>
<dbReference type="GO" id="GO:0031676">
    <property type="term" value="C:plasma membrane-derived thylakoid membrane"/>
    <property type="evidence" value="ECO:0007669"/>
    <property type="project" value="UniProtKB-SubCell"/>
</dbReference>
<dbReference type="GO" id="GO:0015979">
    <property type="term" value="P:photosynthesis"/>
    <property type="evidence" value="ECO:0007669"/>
    <property type="project" value="UniProtKB-UniRule"/>
</dbReference>
<dbReference type="Gene3D" id="1.20.5.510">
    <property type="entry name" value="Single helix bin"/>
    <property type="match status" value="1"/>
</dbReference>
<dbReference type="HAMAP" id="MF_00522">
    <property type="entry name" value="PSI_PsaJ"/>
    <property type="match status" value="1"/>
</dbReference>
<dbReference type="InterPro" id="IPR002615">
    <property type="entry name" value="PSI_PsaJ"/>
</dbReference>
<dbReference type="InterPro" id="IPR036062">
    <property type="entry name" value="PSI_PsaJ_sf"/>
</dbReference>
<dbReference type="NCBIfam" id="NF002743">
    <property type="entry name" value="PRK02733.1"/>
    <property type="match status" value="1"/>
</dbReference>
<dbReference type="PANTHER" id="PTHR36082">
    <property type="match status" value="1"/>
</dbReference>
<dbReference type="PANTHER" id="PTHR36082:SF2">
    <property type="entry name" value="PHOTOSYSTEM I REACTION CENTER SUBUNIT IX"/>
    <property type="match status" value="1"/>
</dbReference>
<dbReference type="Pfam" id="PF01701">
    <property type="entry name" value="PSI_PsaJ"/>
    <property type="match status" value="1"/>
</dbReference>
<dbReference type="SUPFAM" id="SSF81544">
    <property type="entry name" value="Subunit IX of photosystem I reaction centre, PsaJ"/>
    <property type="match status" value="1"/>
</dbReference>
<accession>Q0I867</accession>
<proteinExistence type="inferred from homology"/>
<gene>
    <name evidence="1" type="primary">psaJ</name>
    <name type="ordered locus">sync_2154</name>
</gene>
<evidence type="ECO:0000255" key="1">
    <source>
        <dbReference type="HAMAP-Rule" id="MF_00522"/>
    </source>
</evidence>
<reference key="1">
    <citation type="journal article" date="2006" name="Proc. Natl. Acad. Sci. U.S.A.">
        <title>Genome sequence of Synechococcus CC9311: insights into adaptation to a coastal environment.</title>
        <authorList>
            <person name="Palenik B."/>
            <person name="Ren Q."/>
            <person name="Dupont C.L."/>
            <person name="Myers G.S."/>
            <person name="Heidelberg J.F."/>
            <person name="Badger J.H."/>
            <person name="Madupu R."/>
            <person name="Nelson W.C."/>
            <person name="Brinkac L.M."/>
            <person name="Dodson R.J."/>
            <person name="Durkin A.S."/>
            <person name="Daugherty S.C."/>
            <person name="Sullivan S.A."/>
            <person name="Khouri H."/>
            <person name="Mohamoud Y."/>
            <person name="Halpin R."/>
            <person name="Paulsen I.T."/>
        </authorList>
    </citation>
    <scope>NUCLEOTIDE SEQUENCE [LARGE SCALE GENOMIC DNA]</scope>
    <source>
        <strain>CC9311</strain>
    </source>
</reference>
<organism>
    <name type="scientific">Synechococcus sp. (strain CC9311)</name>
    <dbReference type="NCBI Taxonomy" id="64471"/>
    <lineage>
        <taxon>Bacteria</taxon>
        <taxon>Bacillati</taxon>
        <taxon>Cyanobacteriota</taxon>
        <taxon>Cyanophyceae</taxon>
        <taxon>Synechococcales</taxon>
        <taxon>Synechococcaceae</taxon>
        <taxon>Synechococcus</taxon>
    </lineage>
</organism>
<protein>
    <recommendedName>
        <fullName evidence="1">Photosystem I reaction center subunit IX</fullName>
    </recommendedName>
</protein>